<evidence type="ECO:0000255" key="1"/>
<evidence type="ECO:0000269" key="2">
    <source>
    </source>
</evidence>
<evidence type="ECO:0000269" key="3">
    <source>
    </source>
</evidence>
<evidence type="ECO:0000269" key="4">
    <source>
    </source>
</evidence>
<evidence type="ECO:0000269" key="5">
    <source>
    </source>
</evidence>
<evidence type="ECO:0000305" key="6"/>
<accession>Q7VSX9</accession>
<accession>Q45392</accession>
<sequence>MNRRGGQTAFAAIARNERAIAAFIPYSSHLTDTTLITHGADLVRTWRVQGIAFESAEPELVSQRHEQLNGLWRAISCEQVALWIHCIRRKTQAGLDARYENPFCRALDASYNARLNARQAMTNEFYLTLVYRPGHAALGKRAHHGQAEVRRQLLAHVRRMDEIGSLIETTLRSHGENHEQAITVLGCETDSAGRRYSRTLTLLEFLLTGHWQPVRVPAGPVDAYLGSSRILAGAEMMELRAPTCRRYAQFIDFKEYGTHTEPGMLNALLYEDYEYVITHSFSAVGKRQALAYLQRQRAQLANVQDAAYSQIDDLAHAEDALVNGDFVIGEYHFSMMILGADPRQLRRDVSSAMTRIQERGFLATPVTLALDAAFYAQLPANWAYRSRKAMLTSRNFAGLCSFHNFYGGKRDGNPWGPALSLLSTPSGQPFYFNFHHSGLDEDCRGQMMLGNTRIIGQSGSGKTVLLNFLLCQLQKFRSADADGLTTIFFDKDRGAEICIRALDGQYLRIRDGEPTGFNPLQLPCTDRNVMFLDSLLAMLARAHDSPLTSAQHATLATAVRTVLRMPASLRRMSTLLQNITQATSEQRELVRRLGRWCRDDGAGGTGMLWWVFDNPNDCLDFSRPGNYGIDGTAFLDNAETRTPISMYLLHRMNEAMDGRRFVYLMDEAWKWIDDPAFAEFAGDQQLTIRKKNGLGVFSTQMPSSLLGARVAASLVQQCATEIYLPNPRADRAEYLDGFKCTETEYQLIRSMAEDSHLFLVKQGRQAVVAQLDLSGMDDELAILSGNARNLRCFEQALALTRERDPNDWIAVFHRLRREASAGLR</sequence>
<name>PTLC_BORPE</name>
<proteinExistence type="evidence at protein level"/>
<dbReference type="EMBL" id="L10720">
    <property type="status" value="NOT_ANNOTATED_CDS"/>
    <property type="molecule type" value="Genomic_DNA"/>
</dbReference>
<dbReference type="EMBL" id="BX640422">
    <property type="protein sequence ID" value="CAE44045.1"/>
    <property type="molecule type" value="Genomic_DNA"/>
</dbReference>
<dbReference type="EMBL" id="M14378">
    <property type="protein sequence ID" value="AAA83987.1"/>
    <property type="molecule type" value="Genomic_DNA"/>
</dbReference>
<dbReference type="PIR" id="B47301">
    <property type="entry name" value="B47301"/>
</dbReference>
<dbReference type="RefSeq" id="NP_882289.1">
    <property type="nucleotide sequence ID" value="NC_002929.2"/>
</dbReference>
<dbReference type="RefSeq" id="WP_010931652.1">
    <property type="nucleotide sequence ID" value="NZ_CP039022.1"/>
</dbReference>
<dbReference type="SMR" id="Q7VSX9"/>
<dbReference type="STRING" id="257313.BP3790"/>
<dbReference type="TCDB" id="3.A.7.3.1">
    <property type="family name" value="the type iv (conjugal dna-protein transfer or virb) secretory pathway (ivsp) family"/>
</dbReference>
<dbReference type="PaxDb" id="257313-BP3790"/>
<dbReference type="GeneID" id="69599985"/>
<dbReference type="KEGG" id="bpe:BP3790"/>
<dbReference type="PATRIC" id="fig|257313.5.peg.4094"/>
<dbReference type="eggNOG" id="COG3451">
    <property type="taxonomic scope" value="Bacteria"/>
</dbReference>
<dbReference type="HOGENOM" id="CLU_008341_3_0_4"/>
<dbReference type="Proteomes" id="UP000002676">
    <property type="component" value="Chromosome"/>
</dbReference>
<dbReference type="GO" id="GO:0005886">
    <property type="term" value="C:plasma membrane"/>
    <property type="evidence" value="ECO:0007669"/>
    <property type="project" value="UniProtKB-SubCell"/>
</dbReference>
<dbReference type="GO" id="GO:0005524">
    <property type="term" value="F:ATP binding"/>
    <property type="evidence" value="ECO:0007669"/>
    <property type="project" value="UniProtKB-KW"/>
</dbReference>
<dbReference type="Gene3D" id="3.40.50.300">
    <property type="entry name" value="P-loop containing nucleotide triphosphate hydrolases"/>
    <property type="match status" value="2"/>
</dbReference>
<dbReference type="InterPro" id="IPR004346">
    <property type="entry name" value="CagE_TrbE_VirB"/>
</dbReference>
<dbReference type="InterPro" id="IPR018145">
    <property type="entry name" value="CagE_TrbE_VirB_cntrl_dom"/>
</dbReference>
<dbReference type="InterPro" id="IPR027417">
    <property type="entry name" value="P-loop_NTPase"/>
</dbReference>
<dbReference type="InterPro" id="IPR051162">
    <property type="entry name" value="T4SS_component"/>
</dbReference>
<dbReference type="NCBIfam" id="TIGR00929">
    <property type="entry name" value="VirB4_CagE"/>
    <property type="match status" value="1"/>
</dbReference>
<dbReference type="PANTHER" id="PTHR30121:SF12">
    <property type="entry name" value="TYPE IV SECRETION SYSTEM PROTEIN CAGE"/>
    <property type="match status" value="1"/>
</dbReference>
<dbReference type="PANTHER" id="PTHR30121">
    <property type="entry name" value="UNCHARACTERIZED PROTEIN YJGR-RELATED"/>
    <property type="match status" value="1"/>
</dbReference>
<dbReference type="Pfam" id="PF03135">
    <property type="entry name" value="CagE_TrbE_VirB"/>
    <property type="match status" value="1"/>
</dbReference>
<dbReference type="SUPFAM" id="SSF52540">
    <property type="entry name" value="P-loop containing nucleoside triphosphate hydrolases"/>
    <property type="match status" value="1"/>
</dbReference>
<reference key="1">
    <citation type="journal article" date="1993" name="Proc. Natl. Acad. Sci. U.S.A.">
        <title>Molecular characterization of an operon required for pertussis toxin secretion.</title>
        <authorList>
            <person name="Weiss A.A."/>
            <person name="Johnson F.D."/>
            <person name="Burns D.L."/>
        </authorList>
    </citation>
    <scope>NUCLEOTIDE SEQUENCE [GENOMIC DNA]</scope>
    <scope>FUNCTION</scope>
    <source>
        <strain>Tohama I / BP338</strain>
    </source>
</reference>
<reference key="2">
    <citation type="journal article" date="2003" name="Nat. Genet.">
        <title>Comparative analysis of the genome sequences of Bordetella pertussis, Bordetella parapertussis and Bordetella bronchiseptica.</title>
        <authorList>
            <person name="Parkhill J."/>
            <person name="Sebaihia M."/>
            <person name="Preston A."/>
            <person name="Murphy L.D."/>
            <person name="Thomson N.R."/>
            <person name="Harris D.E."/>
            <person name="Holden M.T.G."/>
            <person name="Churcher C.M."/>
            <person name="Bentley S.D."/>
            <person name="Mungall K.L."/>
            <person name="Cerdeno-Tarraga A.-M."/>
            <person name="Temple L."/>
            <person name="James K.D."/>
            <person name="Harris B."/>
            <person name="Quail M.A."/>
            <person name="Achtman M."/>
            <person name="Atkin R."/>
            <person name="Baker S."/>
            <person name="Basham D."/>
            <person name="Bason N."/>
            <person name="Cherevach I."/>
            <person name="Chillingworth T."/>
            <person name="Collins M."/>
            <person name="Cronin A."/>
            <person name="Davis P."/>
            <person name="Doggett J."/>
            <person name="Feltwell T."/>
            <person name="Goble A."/>
            <person name="Hamlin N."/>
            <person name="Hauser H."/>
            <person name="Holroyd S."/>
            <person name="Jagels K."/>
            <person name="Leather S."/>
            <person name="Moule S."/>
            <person name="Norberczak H."/>
            <person name="O'Neil S."/>
            <person name="Ormond D."/>
            <person name="Price C."/>
            <person name="Rabbinowitsch E."/>
            <person name="Rutter S."/>
            <person name="Sanders M."/>
            <person name="Saunders D."/>
            <person name="Seeger K."/>
            <person name="Sharp S."/>
            <person name="Simmonds M."/>
            <person name="Skelton J."/>
            <person name="Squares R."/>
            <person name="Squares S."/>
            <person name="Stevens K."/>
            <person name="Unwin L."/>
            <person name="Whitehead S."/>
            <person name="Barrell B.G."/>
            <person name="Maskell D.J."/>
        </authorList>
    </citation>
    <scope>NUCLEOTIDE SEQUENCE [LARGE SCALE GENOMIC DNA]</scope>
    <source>
        <strain>Tohama I / ATCC BAA-589 / NCTC 13251</strain>
    </source>
</reference>
<reference key="3">
    <citation type="journal article" date="1987" name="J. Bacteriol.">
        <title>Bordetella parapertussis and Bordetella bronchiseptica contain transcriptionally silent pertussis toxin genes.</title>
        <authorList>
            <person name="Arico B."/>
            <person name="Rappuoli R."/>
        </authorList>
    </citation>
    <scope>NUCLEOTIDE SEQUENCE [GENOMIC DNA] OF 1-205</scope>
    <source>
        <strain>BP165</strain>
    </source>
</reference>
<reference key="4">
    <citation type="journal article" date="1995" name="J. Bacteriol.">
        <title>Synergistic binding of RNA polymerase and BvgA phosphate to the pertussis toxin promoter of Bordetella pertussis.</title>
        <authorList>
            <person name="Boucher P.E."/>
            <person name="Stibitz S."/>
        </authorList>
    </citation>
    <scope>REGULATION BY BVGS/BVGA</scope>
    <source>
        <strain>Tohama I / ATCC BAA-589 / NCTC 13251</strain>
    </source>
</reference>
<reference key="5">
    <citation type="journal article" date="1996" name="Infect. Immun.">
        <title>The pertussis toxin liberation genes of Bordetella pertussis are transcriptionally linked to the pertussis toxin operon.</title>
        <authorList>
            <person name="Ricci S."/>
            <person name="Rappuoli R."/>
            <person name="Scarlato V."/>
        </authorList>
    </citation>
    <scope>COTRANSCRIPTION WITH PTX</scope>
    <source>
        <strain>Wellcome 28</strain>
    </source>
</reference>
<reference key="6">
    <citation type="journal article" date="1999" name="FEMS Microbiol. Lett.">
        <title>Mutants in the ptlA-H genes of Bordetella pertussis are deficient for pertussis toxin secretion.</title>
        <authorList>
            <person name="Craig-Mylius K.A."/>
            <person name="Weiss A.A."/>
        </authorList>
    </citation>
    <scope>FUNCTION</scope>
    <source>
        <strain>Tohama I / BP338</strain>
    </source>
</reference>
<reference key="7">
    <citation type="journal article" date="1999" name="Infect. Immun.">
        <title>Identification and characterization of PtlC, an essential component of the pertussis toxin secretion system.</title>
        <authorList>
            <person name="Cook D.M."/>
            <person name="Farizo K.M."/>
            <person name="Burns D.L."/>
        </authorList>
    </citation>
    <scope>FUNCTION</scope>
    <scope>SUBCELLULAR LOCATION</scope>
    <scope>MUTAGENESIS OF LYS-462</scope>
    <source>
        <strain>Tohama I / BP338</strain>
    </source>
</reference>
<reference key="8">
    <citation type="journal article" date="2004" name="Infect. Immun.">
        <title>Analysis of subassemblies of pertussis toxin subunits in vivo and their interaction with the ptl transport apparatus.</title>
        <authorList>
            <person name="Burns D.L."/>
            <person name="Fiddner S."/>
            <person name="Cheung A.M."/>
            <person name="Verma A."/>
        </authorList>
    </citation>
    <scope>FUNCTION</scope>
    <source>
        <strain>Tohama I / BP338</strain>
    </source>
</reference>
<comment type="function">
    <text evidence="2 3 4 5">Component of the type IV secretion system ptl essential for secretion of assembled pertussis toxin (PTX) through the outer membrane.</text>
</comment>
<comment type="subcellular location">
    <subcellularLocation>
        <location evidence="5">Cell membrane</location>
    </subcellularLocation>
</comment>
<comment type="induction">
    <text>Cotranscribed with ptxABCDE. Activated by the two-component regulatory system BvgS/BvgA.</text>
</comment>
<comment type="similarity">
    <text evidence="6">Belongs to the TrbE/VirB4 family.</text>
</comment>
<feature type="chain" id="PRO_0000262574" description="Type IV secretion system protein PtlC">
    <location>
        <begin position="1"/>
        <end position="824"/>
    </location>
</feature>
<feature type="binding site" evidence="1">
    <location>
        <begin position="456"/>
        <end position="463"/>
    </location>
    <ligand>
        <name>ATP</name>
        <dbReference type="ChEBI" id="CHEBI:30616"/>
    </ligand>
</feature>
<feature type="mutagenesis site" description="Strongly reduces PTX secretion." evidence="5">
    <original>K</original>
    <variation>R</variation>
    <location>
        <position position="462"/>
    </location>
</feature>
<gene>
    <name type="primary">ptlC</name>
    <name type="ordered locus">BP3790</name>
</gene>
<keyword id="KW-0067">ATP-binding</keyword>
<keyword id="KW-1003">Cell membrane</keyword>
<keyword id="KW-0472">Membrane</keyword>
<keyword id="KW-0547">Nucleotide-binding</keyword>
<keyword id="KW-1185">Reference proteome</keyword>
<keyword id="KW-0813">Transport</keyword>
<organism>
    <name type="scientific">Bordetella pertussis (strain Tohama I / ATCC BAA-589 / NCTC 13251)</name>
    <dbReference type="NCBI Taxonomy" id="257313"/>
    <lineage>
        <taxon>Bacteria</taxon>
        <taxon>Pseudomonadati</taxon>
        <taxon>Pseudomonadota</taxon>
        <taxon>Betaproteobacteria</taxon>
        <taxon>Burkholderiales</taxon>
        <taxon>Alcaligenaceae</taxon>
        <taxon>Bordetella</taxon>
    </lineage>
</organism>
<protein>
    <recommendedName>
        <fullName>Type IV secretion system protein PtlC</fullName>
    </recommendedName>
    <alternativeName>
        <fullName>Pertussis toxin liberation protein C</fullName>
    </alternativeName>
</protein>